<name>TMC5_RAT</name>
<dbReference type="EMBL" id="BC088406">
    <property type="protein sequence ID" value="AAH88406.1"/>
    <property type="molecule type" value="mRNA"/>
</dbReference>
<dbReference type="EMBL" id="AABR03003518">
    <property type="status" value="NOT_ANNOTATED_CDS"/>
    <property type="molecule type" value="Genomic_DNA"/>
</dbReference>
<dbReference type="EMBL" id="AABR03003346">
    <property type="status" value="NOT_ANNOTATED_CDS"/>
    <property type="molecule type" value="Genomic_DNA"/>
</dbReference>
<dbReference type="RefSeq" id="NP_001012216.1">
    <molecule id="Q5M7W4-2"/>
    <property type="nucleotide sequence ID" value="NM_001012216.1"/>
</dbReference>
<dbReference type="RefSeq" id="NP_001388555.1">
    <molecule id="Q5M7W4-1"/>
    <property type="nucleotide sequence ID" value="NM_001401626.2"/>
</dbReference>
<dbReference type="RefSeq" id="XP_038941141.1">
    <molecule id="Q5M7W4-1"/>
    <property type="nucleotide sequence ID" value="XM_039085213.2"/>
</dbReference>
<dbReference type="RefSeq" id="XP_038941148.1">
    <molecule id="Q5M7W4-1"/>
    <property type="nucleotide sequence ID" value="XM_039085220.2"/>
</dbReference>
<dbReference type="SMR" id="Q5M7W4"/>
<dbReference type="BioGRID" id="265315">
    <property type="interactions" value="1"/>
</dbReference>
<dbReference type="FunCoup" id="Q5M7W4">
    <property type="interactions" value="13"/>
</dbReference>
<dbReference type="IntAct" id="Q5M7W4">
    <property type="interactions" value="1"/>
</dbReference>
<dbReference type="MINT" id="Q5M7W4"/>
<dbReference type="STRING" id="10116.ENSRNOP00000059631"/>
<dbReference type="iPTMnet" id="Q5M7W4"/>
<dbReference type="PhosphoSitePlus" id="Q5M7W4"/>
<dbReference type="PaxDb" id="10116-ENSRNOP00000059631"/>
<dbReference type="Ensembl" id="ENSRNOT00000055103.5">
    <molecule id="Q5M7W4-2"/>
    <property type="protein sequence ID" value="ENSRNOP00000051978.5"/>
    <property type="gene ID" value="ENSRNOG00000036760.6"/>
</dbReference>
<dbReference type="Ensembl" id="ENSRNOT00000096952.1">
    <molecule id="Q5M7W4-1"/>
    <property type="protein sequence ID" value="ENSRNOP00000097174.1"/>
    <property type="gene ID" value="ENSRNOG00000036760.6"/>
</dbReference>
<dbReference type="GeneID" id="365360"/>
<dbReference type="UCSC" id="RGD:1307037">
    <molecule id="Q5M7W4-1"/>
    <property type="organism name" value="rat"/>
</dbReference>
<dbReference type="AGR" id="RGD:1307037"/>
<dbReference type="CTD" id="79838"/>
<dbReference type="RGD" id="1307037">
    <property type="gene designation" value="Tmc5"/>
</dbReference>
<dbReference type="eggNOG" id="ENOG502QQB2">
    <property type="taxonomic scope" value="Eukaryota"/>
</dbReference>
<dbReference type="GeneTree" id="ENSGT01050000244894"/>
<dbReference type="InParanoid" id="Q5M7W4"/>
<dbReference type="OMA" id="SLPHAYF"/>
<dbReference type="OrthoDB" id="1936208at2759"/>
<dbReference type="PhylomeDB" id="Q5M7W4"/>
<dbReference type="PRO" id="PR:Q5M7W4"/>
<dbReference type="Proteomes" id="UP000002494">
    <property type="component" value="Chromosome 1"/>
</dbReference>
<dbReference type="GO" id="GO:0005886">
    <property type="term" value="C:plasma membrane"/>
    <property type="evidence" value="ECO:0007669"/>
    <property type="project" value="InterPro"/>
</dbReference>
<dbReference type="GO" id="GO:0008381">
    <property type="term" value="F:mechanosensitive monoatomic ion channel activity"/>
    <property type="evidence" value="ECO:0000318"/>
    <property type="project" value="GO_Central"/>
</dbReference>
<dbReference type="InterPro" id="IPR038900">
    <property type="entry name" value="TMC"/>
</dbReference>
<dbReference type="InterPro" id="IPR012496">
    <property type="entry name" value="TMC_dom"/>
</dbReference>
<dbReference type="PANTHER" id="PTHR23302:SF5">
    <property type="entry name" value="TRANSMEMBRANE CHANNEL-LIKE PROTEIN 5"/>
    <property type="match status" value="1"/>
</dbReference>
<dbReference type="PANTHER" id="PTHR23302">
    <property type="entry name" value="TRANSMEMBRANE CHANNEL-RELATED"/>
    <property type="match status" value="1"/>
</dbReference>
<dbReference type="Pfam" id="PF07810">
    <property type="entry name" value="TMC"/>
    <property type="match status" value="1"/>
</dbReference>
<gene>
    <name evidence="5" type="primary">Tmc5</name>
</gene>
<organism>
    <name type="scientific">Rattus norvegicus</name>
    <name type="common">Rat</name>
    <dbReference type="NCBI Taxonomy" id="10116"/>
    <lineage>
        <taxon>Eukaryota</taxon>
        <taxon>Metazoa</taxon>
        <taxon>Chordata</taxon>
        <taxon>Craniata</taxon>
        <taxon>Vertebrata</taxon>
        <taxon>Euteleostomi</taxon>
        <taxon>Mammalia</taxon>
        <taxon>Eutheria</taxon>
        <taxon>Euarchontoglires</taxon>
        <taxon>Glires</taxon>
        <taxon>Rodentia</taxon>
        <taxon>Myomorpha</taxon>
        <taxon>Muroidea</taxon>
        <taxon>Muridae</taxon>
        <taxon>Murinae</taxon>
        <taxon>Rattus</taxon>
    </lineage>
</organism>
<feature type="chain" id="PRO_0000289968" description="Transmembrane channel-like protein 5">
    <location>
        <begin position="1"/>
        <end position="965"/>
    </location>
</feature>
<feature type="topological domain" description="Extracellular" evidence="1">
    <location>
        <begin position="1"/>
        <end position="417"/>
    </location>
</feature>
<feature type="transmembrane region" description="Helical" evidence="1">
    <location>
        <begin position="418"/>
        <end position="438"/>
    </location>
</feature>
<feature type="topological domain" description="Cytoplasmic" evidence="1">
    <location>
        <begin position="439"/>
        <end position="444"/>
    </location>
</feature>
<feature type="transmembrane region" description="Helical" evidence="1">
    <location>
        <begin position="445"/>
        <end position="467"/>
    </location>
</feature>
<feature type="topological domain" description="Extracellular" evidence="1">
    <location>
        <begin position="468"/>
        <end position="484"/>
    </location>
</feature>
<feature type="transmembrane region" description="Helical" evidence="1">
    <location>
        <begin position="485"/>
        <end position="505"/>
    </location>
</feature>
<feature type="topological domain" description="Cytoplasmic" evidence="1">
    <location>
        <begin position="506"/>
        <end position="578"/>
    </location>
</feature>
<feature type="transmembrane region" description="Helical" evidence="1">
    <location>
        <begin position="579"/>
        <end position="599"/>
    </location>
</feature>
<feature type="topological domain" description="Extracellular" evidence="1">
    <location>
        <begin position="600"/>
        <end position="613"/>
    </location>
</feature>
<feature type="transmembrane region" description="Helical" evidence="1">
    <location>
        <begin position="614"/>
        <end position="634"/>
    </location>
</feature>
<feature type="topological domain" description="Cytoplasmic" evidence="1">
    <location>
        <begin position="635"/>
        <end position="657"/>
    </location>
</feature>
<feature type="transmembrane region" description="Helical" evidence="1">
    <location>
        <begin position="658"/>
        <end position="678"/>
    </location>
</feature>
<feature type="topological domain" description="Extracellular" evidence="1">
    <location>
        <begin position="679"/>
        <end position="691"/>
    </location>
</feature>
<feature type="transmembrane region" description="Helical" evidence="1">
    <location>
        <begin position="692"/>
        <end position="712"/>
    </location>
</feature>
<feature type="topological domain" description="Cytoplasmic" evidence="1">
    <location>
        <begin position="713"/>
        <end position="747"/>
    </location>
</feature>
<feature type="transmembrane region" description="Helical" evidence="1">
    <location>
        <begin position="748"/>
        <end position="768"/>
    </location>
</feature>
<feature type="topological domain" description="Extracellular" evidence="1">
    <location>
        <begin position="769"/>
        <end position="794"/>
    </location>
</feature>
<feature type="transmembrane region" description="Helical" evidence="1">
    <location>
        <begin position="795"/>
        <end position="815"/>
    </location>
</feature>
<feature type="topological domain" description="Cytoplasmic" evidence="1">
    <location>
        <begin position="816"/>
        <end position="859"/>
    </location>
</feature>
<feature type="transmembrane region" description="Helical" evidence="1">
    <location>
        <begin position="860"/>
        <end position="880"/>
    </location>
</feature>
<feature type="topological domain" description="Extracellular" evidence="1">
    <location>
        <begin position="881"/>
        <end position="965"/>
    </location>
</feature>
<feature type="region of interest" description="Disordered" evidence="2">
    <location>
        <begin position="1"/>
        <end position="235"/>
    </location>
</feature>
<feature type="compositionally biased region" description="Polar residues" evidence="2">
    <location>
        <begin position="1"/>
        <end position="10"/>
    </location>
</feature>
<feature type="compositionally biased region" description="Polar residues" evidence="2">
    <location>
        <begin position="20"/>
        <end position="31"/>
    </location>
</feature>
<feature type="compositionally biased region" description="Basic and acidic residues" evidence="2">
    <location>
        <begin position="61"/>
        <end position="70"/>
    </location>
</feature>
<feature type="compositionally biased region" description="Polar residues" evidence="2">
    <location>
        <begin position="166"/>
        <end position="181"/>
    </location>
</feature>
<feature type="modified residue" description="Phosphoserine" evidence="6">
    <location>
        <position position="248"/>
    </location>
</feature>
<feature type="splice variant" id="VSP_026049" description="In isoform 2." evidence="3">
    <location>
        <begin position="1"/>
        <end position="207"/>
    </location>
</feature>
<feature type="splice variant" id="VSP_026050" description="In isoform 2." evidence="3">
    <original>GAENQPNSPDFYGKPDYPGAEEGDVYSPSKTLGVIGRSRGSFGILGREDGDYPEGIEMASLGMAGDPRNGYVNPAYMRGSSPVCPDRNLLLCARDWNTSP</original>
    <variation>MLSDDQVNEIIIEVENVPSGVQRNVSSNQITLRKSSAKPNFSMLSSSTADTIDCQIFSHGNDRRHNRLLRFSSLNDSISQIYHGPECLGMDEACTFHETV</variation>
    <location>
        <begin position="208"/>
        <end position="307"/>
    </location>
</feature>
<sequence>MSSFHKNSSYMEDPDYPGYSGSQNHTQNYLRTQDDLEFPGCLDNPGFHHPRRNPYSSDSRTNPDYHHSLAEPDYPGSPSDADYQNTRCHPRSAHPRTRPDYEPDYEPDYNDFQSESYHPDLSMEPDYPGSHGHPGFAGVRSSVNSTGPRTNLGYLDLEEPDYPGAQGNSYHSGPRSHSNLPGSRRNAGYAGSRINSYPDSLGEPDYPGAENQPNSPDFYGKPDYPGAEEGDVYSPSKTLGVIGRSRGSFGILGREDGDYPEGIEMASLGMAGDPRNGYVNPAYMRGSSPVCPDRNLLLCARDWNTSPQGQKLIASLVPMTSRDRIKTIRNQPRTMQEKRELRKIVDKEKNKQSHGTFEANCCAQCLSSLSLAYRRTKSSLSELLNYISLWQKRFKVIGGKFGTSVLSYFSFLRWLLKFNIFSFVMNFSFIIIPQFTVGEKNTLQFTGLEFFTGAGYFRETVMYYGFYTNSTIRHRMGGASYNMQLAYIFTIGACLVICFFSLLFSMAKYFRNNFINPHIYSRGIAKLIFCWDFTVTHEKAVKLKQKNLSTEIRENLSEIRQENDRLTLNQKLTRFSVHVAAWLVSTGITAACCVAVYYLAEYNSEFLKTHKNPGAVLLLPFVVSCINLAVPRFYSMFRLVERYEIPRQEVYVLLIRNIFLKISIVGILCYYWLNIVALSGEECWETLIGQDIYRLLLMDFVFSLADSLLGEFLRRLIGMKFITSLSLQEFDIARNVLELIYAQTLAWLGIFFCPLLPFIQMITLFIMFYVKNVSLMMNFQPPSKAWRASQMITFFIFLLFFPSFTGVLCTLAITIWRLKPSADCGPFRGLPSFIQSIYSWIDTLSHRPGYLWVVWIYQNLIGSVHFFFILTLIVLIITYLYWQITEGRKVMIRLLHEQIINEGKDKMFLIEKLTKLQDIERRANPSTLVLERREVEQQSPLHLEELDAAPDLRLRRSMQEENAIA</sequence>
<proteinExistence type="evidence at protein level"/>
<reference key="1">
    <citation type="journal article" date="2004" name="Genome Res.">
        <title>The status, quality, and expansion of the NIH full-length cDNA project: the Mammalian Gene Collection (MGC).</title>
        <authorList>
            <consortium name="The MGC Project Team"/>
        </authorList>
    </citation>
    <scope>NUCLEOTIDE SEQUENCE [LARGE SCALE MRNA] (ISOFORM 2)</scope>
    <source>
        <tissue>Testis</tissue>
    </source>
</reference>
<reference key="2">
    <citation type="journal article" date="2004" name="Nature">
        <title>Genome sequence of the Brown Norway rat yields insights into mammalian evolution.</title>
        <authorList>
            <person name="Gibbs R.A."/>
            <person name="Weinstock G.M."/>
            <person name="Metzker M.L."/>
            <person name="Muzny D.M."/>
            <person name="Sodergren E.J."/>
            <person name="Scherer S."/>
            <person name="Scott G."/>
            <person name="Steffen D."/>
            <person name="Worley K.C."/>
            <person name="Burch P.E."/>
            <person name="Okwuonu G."/>
            <person name="Hines S."/>
            <person name="Lewis L."/>
            <person name="Deramo C."/>
            <person name="Delgado O."/>
            <person name="Dugan-Rocha S."/>
            <person name="Miner G."/>
            <person name="Morgan M."/>
            <person name="Hawes A."/>
            <person name="Gill R."/>
            <person name="Holt R.A."/>
            <person name="Adams M.D."/>
            <person name="Amanatides P.G."/>
            <person name="Baden-Tillson H."/>
            <person name="Barnstead M."/>
            <person name="Chin S."/>
            <person name="Evans C.A."/>
            <person name="Ferriera S."/>
            <person name="Fosler C."/>
            <person name="Glodek A."/>
            <person name="Gu Z."/>
            <person name="Jennings D."/>
            <person name="Kraft C.L."/>
            <person name="Nguyen T."/>
            <person name="Pfannkoch C.M."/>
            <person name="Sitter C."/>
            <person name="Sutton G.G."/>
            <person name="Venter J.C."/>
            <person name="Woodage T."/>
            <person name="Smith D."/>
            <person name="Lee H.-M."/>
            <person name="Gustafson E."/>
            <person name="Cahill P."/>
            <person name="Kana A."/>
            <person name="Doucette-Stamm L."/>
            <person name="Weinstock K."/>
            <person name="Fechtel K."/>
            <person name="Weiss R.B."/>
            <person name="Dunn D.M."/>
            <person name="Green E.D."/>
            <person name="Blakesley R.W."/>
            <person name="Bouffard G.G."/>
            <person name="De Jong P.J."/>
            <person name="Osoegawa K."/>
            <person name="Zhu B."/>
            <person name="Marra M."/>
            <person name="Schein J."/>
            <person name="Bosdet I."/>
            <person name="Fjell C."/>
            <person name="Jones S."/>
            <person name="Krzywinski M."/>
            <person name="Mathewson C."/>
            <person name="Siddiqui A."/>
            <person name="Wye N."/>
            <person name="McPherson J."/>
            <person name="Zhao S."/>
            <person name="Fraser C.M."/>
            <person name="Shetty J."/>
            <person name="Shatsman S."/>
            <person name="Geer K."/>
            <person name="Chen Y."/>
            <person name="Abramzon S."/>
            <person name="Nierman W.C."/>
            <person name="Havlak P.H."/>
            <person name="Chen R."/>
            <person name="Durbin K.J."/>
            <person name="Egan A."/>
            <person name="Ren Y."/>
            <person name="Song X.-Z."/>
            <person name="Li B."/>
            <person name="Liu Y."/>
            <person name="Qin X."/>
            <person name="Cawley S."/>
            <person name="Cooney A.J."/>
            <person name="D'Souza L.M."/>
            <person name="Martin K."/>
            <person name="Wu J.Q."/>
            <person name="Gonzalez-Garay M.L."/>
            <person name="Jackson A.R."/>
            <person name="Kalafus K.J."/>
            <person name="McLeod M.P."/>
            <person name="Milosavljevic A."/>
            <person name="Virk D."/>
            <person name="Volkov A."/>
            <person name="Wheeler D.A."/>
            <person name="Zhang Z."/>
            <person name="Bailey J.A."/>
            <person name="Eichler E.E."/>
            <person name="Tuzun E."/>
            <person name="Birney E."/>
            <person name="Mongin E."/>
            <person name="Ureta-Vidal A."/>
            <person name="Woodwark C."/>
            <person name="Zdobnov E."/>
            <person name="Bork P."/>
            <person name="Suyama M."/>
            <person name="Torrents D."/>
            <person name="Alexandersson M."/>
            <person name="Trask B.J."/>
            <person name="Young J.M."/>
            <person name="Huang H."/>
            <person name="Wang H."/>
            <person name="Xing H."/>
            <person name="Daniels S."/>
            <person name="Gietzen D."/>
            <person name="Schmidt J."/>
            <person name="Stevens K."/>
            <person name="Vitt U."/>
            <person name="Wingrove J."/>
            <person name="Camara F."/>
            <person name="Mar Alba M."/>
            <person name="Abril J.F."/>
            <person name="Guigo R."/>
            <person name="Smit A."/>
            <person name="Dubchak I."/>
            <person name="Rubin E.M."/>
            <person name="Couronne O."/>
            <person name="Poliakov A."/>
            <person name="Huebner N."/>
            <person name="Ganten D."/>
            <person name="Goesele C."/>
            <person name="Hummel O."/>
            <person name="Kreitler T."/>
            <person name="Lee Y.-A."/>
            <person name="Monti J."/>
            <person name="Schulz H."/>
            <person name="Zimdahl H."/>
            <person name="Himmelbauer H."/>
            <person name="Lehrach H."/>
            <person name="Jacob H.J."/>
            <person name="Bromberg S."/>
            <person name="Gullings-Handley J."/>
            <person name="Jensen-Seaman M.I."/>
            <person name="Kwitek A.E."/>
            <person name="Lazar J."/>
            <person name="Pasko D."/>
            <person name="Tonellato P.J."/>
            <person name="Twigger S."/>
            <person name="Ponting C.P."/>
            <person name="Duarte J.M."/>
            <person name="Rice S."/>
            <person name="Goodstadt L."/>
            <person name="Beatson S.A."/>
            <person name="Emes R.D."/>
            <person name="Winter E.E."/>
            <person name="Webber C."/>
            <person name="Brandt P."/>
            <person name="Nyakatura G."/>
            <person name="Adetobi M."/>
            <person name="Chiaromonte F."/>
            <person name="Elnitski L."/>
            <person name="Eswara P."/>
            <person name="Hardison R.C."/>
            <person name="Hou M."/>
            <person name="Kolbe D."/>
            <person name="Makova K."/>
            <person name="Miller W."/>
            <person name="Nekrutenko A."/>
            <person name="Riemer C."/>
            <person name="Schwartz S."/>
            <person name="Taylor J."/>
            <person name="Yang S."/>
            <person name="Zhang Y."/>
            <person name="Lindpaintner K."/>
            <person name="Andrews T.D."/>
            <person name="Caccamo M."/>
            <person name="Clamp M."/>
            <person name="Clarke L."/>
            <person name="Curwen V."/>
            <person name="Durbin R.M."/>
            <person name="Eyras E."/>
            <person name="Searle S.M."/>
            <person name="Cooper G.M."/>
            <person name="Batzoglou S."/>
            <person name="Brudno M."/>
            <person name="Sidow A."/>
            <person name="Stone E.A."/>
            <person name="Payseur B.A."/>
            <person name="Bourque G."/>
            <person name="Lopez-Otin C."/>
            <person name="Puente X.S."/>
            <person name="Chakrabarti K."/>
            <person name="Chatterji S."/>
            <person name="Dewey C."/>
            <person name="Pachter L."/>
            <person name="Bray N."/>
            <person name="Yap V.B."/>
            <person name="Caspi A."/>
            <person name="Tesler G."/>
            <person name="Pevzner P.A."/>
            <person name="Haussler D."/>
            <person name="Roskin K.M."/>
            <person name="Baertsch R."/>
            <person name="Clawson H."/>
            <person name="Furey T.S."/>
            <person name="Hinrichs A.S."/>
            <person name="Karolchik D."/>
            <person name="Kent W.J."/>
            <person name="Rosenbloom K.R."/>
            <person name="Trumbower H."/>
            <person name="Weirauch M."/>
            <person name="Cooper D.N."/>
            <person name="Stenson P.D."/>
            <person name="Ma B."/>
            <person name="Brent M."/>
            <person name="Arumugam M."/>
            <person name="Shteynberg D."/>
            <person name="Copley R.R."/>
            <person name="Taylor M.S."/>
            <person name="Riethman H."/>
            <person name="Mudunuri U."/>
            <person name="Peterson J."/>
            <person name="Guyer M."/>
            <person name="Felsenfeld A."/>
            <person name="Old S."/>
            <person name="Mockrin S."/>
            <person name="Collins F.S."/>
        </authorList>
    </citation>
    <scope>NUCLEOTIDE SEQUENCE [LARGE SCALE GENOMIC DNA] OF 1-515</scope>
    <source>
        <strain>Brown Norway</strain>
    </source>
</reference>
<reference key="3">
    <citation type="journal article" date="2012" name="Nat. Commun.">
        <title>Quantitative maps of protein phosphorylation sites across 14 different rat organs and tissues.</title>
        <authorList>
            <person name="Lundby A."/>
            <person name="Secher A."/>
            <person name="Lage K."/>
            <person name="Nordsborg N.B."/>
            <person name="Dmytriyev A."/>
            <person name="Lundby C."/>
            <person name="Olsen J.V."/>
        </authorList>
    </citation>
    <scope>PHOSPHORYLATION [LARGE SCALE ANALYSIS] AT SER-248</scope>
    <scope>IDENTIFICATION BY MASS SPECTROMETRY [LARGE SCALE ANALYSIS]</scope>
</reference>
<comment type="function">
    <text evidence="4">Probable component of an ion channel (Probable). Molecular function hasn't been characterized yet (Probable).</text>
</comment>
<comment type="subcellular location">
    <subcellularLocation>
        <location evidence="4">Membrane</location>
        <topology evidence="4">Multi-pass membrane protein</topology>
    </subcellularLocation>
</comment>
<comment type="alternative products">
    <event type="alternative splicing"/>
    <isoform>
        <id>Q5M7W4-1</id>
        <name>1</name>
        <sequence type="displayed"/>
    </isoform>
    <isoform>
        <id>Q5M7W4-2</id>
        <name>2</name>
        <sequence type="described" ref="VSP_026049 VSP_026050"/>
    </isoform>
</comment>
<comment type="similarity">
    <text evidence="4">Belongs to the TMC family.</text>
</comment>
<protein>
    <recommendedName>
        <fullName>Transmembrane channel-like protein 5</fullName>
    </recommendedName>
</protein>
<evidence type="ECO:0000255" key="1"/>
<evidence type="ECO:0000256" key="2">
    <source>
        <dbReference type="SAM" id="MobiDB-lite"/>
    </source>
</evidence>
<evidence type="ECO:0000303" key="3">
    <source>
    </source>
</evidence>
<evidence type="ECO:0000305" key="4"/>
<evidence type="ECO:0000312" key="5">
    <source>
        <dbReference type="RGD" id="1307037"/>
    </source>
</evidence>
<evidence type="ECO:0007744" key="6">
    <source>
    </source>
</evidence>
<keyword id="KW-0025">Alternative splicing</keyword>
<keyword id="KW-0472">Membrane</keyword>
<keyword id="KW-0597">Phosphoprotein</keyword>
<keyword id="KW-1185">Reference proteome</keyword>
<keyword id="KW-0812">Transmembrane</keyword>
<keyword id="KW-1133">Transmembrane helix</keyword>
<accession>Q5M7W4</accession>